<sequence length="968" mass="109865">MPFTLGQRWISDTESELGLGTVVAMDARTVTLLFPSTGENRLYARSDSPVTRVMFNPGDTITSHEGWQLHIDEVKEENGLLVYVGTRLDTEETNVTLREVLLDSKLVFSKPQDRLFAGQIDRMDRFALRYRARKFQSEQYRMPYSGLRGQRTNLIPHQLNIAHDVGRRHAPRVLLADEVGLGKTIEAGMILHQQLLSGAAERVLIIVPETLQHQWLVEMLRRFNLRFALFDDERYTEAQHDAYNPFETEQLVICSLDFARRNKQRLEHLCDAEWDLLVVDEAHHLVWSTDAPSREYMAIEQLAERVPGVLLLTATPEQLGMESHFARLRLLDPNRFHDFEQFVEEQKNYRPVADAVAMLLAGNKLSNDELNRLGDLIGEQDIEPLLQAANSDRDDAQAARDELVSMLMDRHGTSRVLFRNTRNGVKGFPKRELHTVKLPLPTQYQTAIKVSGIMGARKSPEDRARDMLYPEQIYQEFEGDTGTWWNFDPRVEWLMGYLTSHRSQKVLVICAKATTALQLEQVLREREGIRAAVFHEGMSIIERDRAAAWFAEEDTGAQVLLCSEIGSEGRNFQFASNLVMFDLPFNPDLLEQRIGRLDRIGQAHDIQIHVPYLEKTAQSVLVRWYHEGLDAFEHTCPTGRAIYDSAYASLINYLAAPEETDGFDDLIKSCREQHEALKAQLEQGRDRLLEIHSNGGEKAQQLAQSIEEQDDDTNLIAFAMNLFDIVGINQDDRGDNLIVLTPSDHMLVPDFPGLPEDGCTITFERDVALSREDAQFITWEHPLIRNGLDLILSGDTGSSTISLLKNKALPVGTLLVELVYVVEAQAPKQLQLNRFLPPTPVRMLLDKNGNNLAAQVEFETFNRQLSAVNRHTGSKLVNAVQQDVHAILQLGETQIEKSARALIDNARREADEKLSGELSRLEALRAVNPNIRDDELAAIDSNRQQVLESLNQAGWRLDALRLIVVTHQ</sequence>
<feature type="initiator methionine" description="Removed" evidence="1">
    <location>
        <position position="1"/>
    </location>
</feature>
<feature type="chain" id="PRO_0000207185" description="RNA polymerase-associated protein RapA">
    <location>
        <begin position="2"/>
        <end position="968"/>
    </location>
</feature>
<feature type="domain" description="Helicase ATP-binding" evidence="2">
    <location>
        <begin position="164"/>
        <end position="334"/>
    </location>
</feature>
<feature type="domain" description="Helicase C-terminal" evidence="2">
    <location>
        <begin position="490"/>
        <end position="685"/>
    </location>
</feature>
<feature type="short sequence motif" description="DEAH box">
    <location>
        <begin position="280"/>
        <end position="283"/>
    </location>
</feature>
<feature type="binding site" evidence="2">
    <location>
        <begin position="177"/>
        <end position="184"/>
    </location>
    <ligand>
        <name>ATP</name>
        <dbReference type="ChEBI" id="CHEBI:30616"/>
    </ligand>
</feature>
<evidence type="ECO:0000250" key="1"/>
<evidence type="ECO:0000255" key="2">
    <source>
        <dbReference type="HAMAP-Rule" id="MF_01821"/>
    </source>
</evidence>
<comment type="function">
    <text evidence="2">Transcription regulator that activates transcription by stimulating RNA polymerase (RNAP) recycling in case of stress conditions such as supercoiled DNA or high salt concentrations. Probably acts by releasing the RNAP, when it is trapped or immobilized on tightly supercoiled DNA. Does not activate transcription on linear DNA. Probably not involved in DNA repair.</text>
</comment>
<comment type="subunit">
    <text evidence="2">Interacts with the RNAP. Has a higher affinity for the core RNAP than for the holoenzyme. Its ATPase activity is stimulated by binding to RNAP.</text>
</comment>
<comment type="similarity">
    <text evidence="2">Belongs to the SNF2/RAD54 helicase family. RapA subfamily.</text>
</comment>
<protein>
    <recommendedName>
        <fullName evidence="2">RNA polymerase-associated protein RapA</fullName>
        <ecNumber evidence="2">3.6.4.-</ecNumber>
    </recommendedName>
    <alternativeName>
        <fullName evidence="2">ATP-dependent helicase HepA</fullName>
    </alternativeName>
</protein>
<name>RAPA_SALTY</name>
<reference key="1">
    <citation type="journal article" date="2001" name="Nature">
        <title>Complete genome sequence of Salmonella enterica serovar Typhimurium LT2.</title>
        <authorList>
            <person name="McClelland M."/>
            <person name="Sanderson K.E."/>
            <person name="Spieth J."/>
            <person name="Clifton S.W."/>
            <person name="Latreille P."/>
            <person name="Courtney L."/>
            <person name="Porwollik S."/>
            <person name="Ali J."/>
            <person name="Dante M."/>
            <person name="Du F."/>
            <person name="Hou S."/>
            <person name="Layman D."/>
            <person name="Leonard S."/>
            <person name="Nguyen C."/>
            <person name="Scott K."/>
            <person name="Holmes A."/>
            <person name="Grewal N."/>
            <person name="Mulvaney E."/>
            <person name="Ryan E."/>
            <person name="Sun H."/>
            <person name="Florea L."/>
            <person name="Miller W."/>
            <person name="Stoneking T."/>
            <person name="Nhan M."/>
            <person name="Waterston R."/>
            <person name="Wilson R.K."/>
        </authorList>
    </citation>
    <scope>NUCLEOTIDE SEQUENCE [LARGE SCALE GENOMIC DNA]</scope>
    <source>
        <strain>LT2 / SGSC1412 / ATCC 700720</strain>
    </source>
</reference>
<proteinExistence type="inferred from homology"/>
<dbReference type="EC" id="3.6.4.-" evidence="2"/>
<dbReference type="EMBL" id="AE006468">
    <property type="protein sequence ID" value="AAL19060.1"/>
    <property type="molecule type" value="Genomic_DNA"/>
</dbReference>
<dbReference type="RefSeq" id="NP_459101.1">
    <property type="nucleotide sequence ID" value="NC_003197.2"/>
</dbReference>
<dbReference type="RefSeq" id="WP_001116976.1">
    <property type="nucleotide sequence ID" value="NC_003197.2"/>
</dbReference>
<dbReference type="SMR" id="Q8ZRV8"/>
<dbReference type="STRING" id="99287.STM0096"/>
<dbReference type="PaxDb" id="99287-STM0096"/>
<dbReference type="GeneID" id="1251614"/>
<dbReference type="KEGG" id="stm:STM0096"/>
<dbReference type="PATRIC" id="fig|99287.12.peg.100"/>
<dbReference type="HOGENOM" id="CLU_011520_0_0_6"/>
<dbReference type="OMA" id="MSILERD"/>
<dbReference type="PhylomeDB" id="Q8ZRV8"/>
<dbReference type="BioCyc" id="SENT99287:STM0096-MONOMER"/>
<dbReference type="Proteomes" id="UP000001014">
    <property type="component" value="Chromosome"/>
</dbReference>
<dbReference type="GO" id="GO:0005524">
    <property type="term" value="F:ATP binding"/>
    <property type="evidence" value="ECO:0007669"/>
    <property type="project" value="UniProtKB-UniRule"/>
</dbReference>
<dbReference type="GO" id="GO:0003682">
    <property type="term" value="F:chromatin binding"/>
    <property type="evidence" value="ECO:0000318"/>
    <property type="project" value="GO_Central"/>
</dbReference>
<dbReference type="GO" id="GO:0003677">
    <property type="term" value="F:DNA binding"/>
    <property type="evidence" value="ECO:0000318"/>
    <property type="project" value="GO_Central"/>
</dbReference>
<dbReference type="GO" id="GO:0004386">
    <property type="term" value="F:helicase activity"/>
    <property type="evidence" value="ECO:0007669"/>
    <property type="project" value="UniProtKB-UniRule"/>
</dbReference>
<dbReference type="GO" id="GO:0016817">
    <property type="term" value="F:hydrolase activity, acting on acid anhydrides"/>
    <property type="evidence" value="ECO:0007669"/>
    <property type="project" value="InterPro"/>
</dbReference>
<dbReference type="GO" id="GO:0140750">
    <property type="term" value="F:nucleosome array spacer activity"/>
    <property type="evidence" value="ECO:0000318"/>
    <property type="project" value="GO_Central"/>
</dbReference>
<dbReference type="GO" id="GO:0045944">
    <property type="term" value="P:positive regulation of transcription by RNA polymerase II"/>
    <property type="evidence" value="ECO:0000318"/>
    <property type="project" value="GO_Central"/>
</dbReference>
<dbReference type="CDD" id="cd18011">
    <property type="entry name" value="DEXDc_RapA"/>
    <property type="match status" value="1"/>
</dbReference>
<dbReference type="CDD" id="cd18793">
    <property type="entry name" value="SF2_C_SNF"/>
    <property type="match status" value="1"/>
</dbReference>
<dbReference type="FunFam" id="2.30.30.140:FF:000020">
    <property type="entry name" value="RNA polymerase-associated protein RapA"/>
    <property type="match status" value="1"/>
</dbReference>
<dbReference type="FunFam" id="3.30.360.80:FF:000001">
    <property type="entry name" value="RNA polymerase-associated protein RapA"/>
    <property type="match status" value="1"/>
</dbReference>
<dbReference type="FunFam" id="3.40.50.10810:FF:000012">
    <property type="entry name" value="RNA polymerase-associated protein RapA"/>
    <property type="match status" value="1"/>
</dbReference>
<dbReference type="FunFam" id="3.40.50.300:FF:000350">
    <property type="entry name" value="RNA polymerase-associated protein RapA"/>
    <property type="match status" value="1"/>
</dbReference>
<dbReference type="Gene3D" id="2.30.30.140">
    <property type="match status" value="1"/>
</dbReference>
<dbReference type="Gene3D" id="2.30.30.930">
    <property type="match status" value="1"/>
</dbReference>
<dbReference type="Gene3D" id="3.30.360.80">
    <property type="match status" value="1"/>
</dbReference>
<dbReference type="Gene3D" id="6.10.140.1500">
    <property type="match status" value="1"/>
</dbReference>
<dbReference type="Gene3D" id="6.10.140.2230">
    <property type="match status" value="1"/>
</dbReference>
<dbReference type="Gene3D" id="3.40.50.300">
    <property type="entry name" value="P-loop containing nucleotide triphosphate hydrolases"/>
    <property type="match status" value="1"/>
</dbReference>
<dbReference type="Gene3D" id="3.40.50.10810">
    <property type="entry name" value="Tandem AAA-ATPase domain"/>
    <property type="match status" value="1"/>
</dbReference>
<dbReference type="HAMAP" id="MF_01821">
    <property type="entry name" value="Helicase_RapA"/>
    <property type="match status" value="1"/>
</dbReference>
<dbReference type="InterPro" id="IPR014001">
    <property type="entry name" value="Helicase_ATP-bd"/>
</dbReference>
<dbReference type="InterPro" id="IPR001650">
    <property type="entry name" value="Helicase_C-like"/>
</dbReference>
<dbReference type="InterPro" id="IPR023949">
    <property type="entry name" value="Helicase_RapA"/>
</dbReference>
<dbReference type="InterPro" id="IPR027417">
    <property type="entry name" value="P-loop_NTPase"/>
</dbReference>
<dbReference type="InterPro" id="IPR022737">
    <property type="entry name" value="RapA_C"/>
</dbReference>
<dbReference type="InterPro" id="IPR038718">
    <property type="entry name" value="SNF2-like_sf"/>
</dbReference>
<dbReference type="InterPro" id="IPR049730">
    <property type="entry name" value="SNF2/RAD54-like_C"/>
</dbReference>
<dbReference type="InterPro" id="IPR000330">
    <property type="entry name" value="SNF2_N"/>
</dbReference>
<dbReference type="InterPro" id="IPR040765">
    <property type="entry name" value="Tudor_1_RapA"/>
</dbReference>
<dbReference type="InterPro" id="IPR040766">
    <property type="entry name" value="Tudor_2_RapA"/>
</dbReference>
<dbReference type="NCBIfam" id="NF003426">
    <property type="entry name" value="PRK04914.1"/>
    <property type="match status" value="1"/>
</dbReference>
<dbReference type="PANTHER" id="PTHR45766">
    <property type="entry name" value="DNA ANNEALING HELICASE AND ENDONUCLEASE ZRANB3 FAMILY MEMBER"/>
    <property type="match status" value="1"/>
</dbReference>
<dbReference type="PANTHER" id="PTHR45766:SF6">
    <property type="entry name" value="SWI_SNF-RELATED MATRIX-ASSOCIATED ACTIN-DEPENDENT REGULATOR OF CHROMATIN SUBFAMILY A-LIKE PROTEIN 1"/>
    <property type="match status" value="1"/>
</dbReference>
<dbReference type="Pfam" id="PF00271">
    <property type="entry name" value="Helicase_C"/>
    <property type="match status" value="1"/>
</dbReference>
<dbReference type="Pfam" id="PF12137">
    <property type="entry name" value="RapA_C"/>
    <property type="match status" value="1"/>
</dbReference>
<dbReference type="Pfam" id="PF00176">
    <property type="entry name" value="SNF2-rel_dom"/>
    <property type="match status" value="1"/>
</dbReference>
<dbReference type="Pfam" id="PF18339">
    <property type="entry name" value="Tudor_1_RapA"/>
    <property type="match status" value="1"/>
</dbReference>
<dbReference type="Pfam" id="PF18337">
    <property type="entry name" value="Tudor_RapA"/>
    <property type="match status" value="1"/>
</dbReference>
<dbReference type="SMART" id="SM00487">
    <property type="entry name" value="DEXDc"/>
    <property type="match status" value="1"/>
</dbReference>
<dbReference type="SMART" id="SM00490">
    <property type="entry name" value="HELICc"/>
    <property type="match status" value="1"/>
</dbReference>
<dbReference type="SUPFAM" id="SSF52540">
    <property type="entry name" value="P-loop containing nucleoside triphosphate hydrolases"/>
    <property type="match status" value="2"/>
</dbReference>
<dbReference type="PROSITE" id="PS51192">
    <property type="entry name" value="HELICASE_ATP_BIND_1"/>
    <property type="match status" value="1"/>
</dbReference>
<dbReference type="PROSITE" id="PS51194">
    <property type="entry name" value="HELICASE_CTER"/>
    <property type="match status" value="1"/>
</dbReference>
<keyword id="KW-0010">Activator</keyword>
<keyword id="KW-0067">ATP-binding</keyword>
<keyword id="KW-0238">DNA-binding</keyword>
<keyword id="KW-0347">Helicase</keyword>
<keyword id="KW-0378">Hydrolase</keyword>
<keyword id="KW-0547">Nucleotide-binding</keyword>
<keyword id="KW-1185">Reference proteome</keyword>
<keyword id="KW-0804">Transcription</keyword>
<keyword id="KW-0805">Transcription regulation</keyword>
<accession>Q8ZRV8</accession>
<organism>
    <name type="scientific">Salmonella typhimurium (strain LT2 / SGSC1412 / ATCC 700720)</name>
    <dbReference type="NCBI Taxonomy" id="99287"/>
    <lineage>
        <taxon>Bacteria</taxon>
        <taxon>Pseudomonadati</taxon>
        <taxon>Pseudomonadota</taxon>
        <taxon>Gammaproteobacteria</taxon>
        <taxon>Enterobacterales</taxon>
        <taxon>Enterobacteriaceae</taxon>
        <taxon>Salmonella</taxon>
    </lineage>
</organism>
<gene>
    <name evidence="2" type="primary">rapA</name>
    <name type="synonym">hepA</name>
    <name type="ordered locus">STM0096</name>
</gene>